<reference key="1">
    <citation type="journal article" date="1995" name="Plant Mol. Biol. Rep.">
        <title>Complete nucleotide sequence of the Porphyra purpurea chloroplast genome.</title>
        <authorList>
            <person name="Reith M.E."/>
            <person name="Munholland J."/>
        </authorList>
    </citation>
    <scope>NUCLEOTIDE SEQUENCE [LARGE SCALE GENOMIC DNA]</scope>
    <source>
        <strain>Avonport</strain>
    </source>
</reference>
<name>RK18_PORPU</name>
<keyword id="KW-0150">Chloroplast</keyword>
<keyword id="KW-0934">Plastid</keyword>
<keyword id="KW-0687">Ribonucleoprotein</keyword>
<keyword id="KW-0689">Ribosomal protein</keyword>
<keyword id="KW-0694">RNA-binding</keyword>
<keyword id="KW-0699">rRNA-binding</keyword>
<geneLocation type="chloroplast"/>
<protein>
    <recommendedName>
        <fullName evidence="2">Large ribosomal subunit protein uL18c</fullName>
    </recommendedName>
    <alternativeName>
        <fullName>50S ribosomal protein L18, chloroplastic</fullName>
    </alternativeName>
</protein>
<proteinExistence type="inferred from homology"/>
<dbReference type="EMBL" id="U38804">
    <property type="protein sequence ID" value="AAC08185.1"/>
    <property type="molecule type" value="Genomic_DNA"/>
</dbReference>
<dbReference type="PIR" id="S73220">
    <property type="entry name" value="S73220"/>
</dbReference>
<dbReference type="RefSeq" id="NP_053909.1">
    <property type="nucleotide sequence ID" value="NC_000925.1"/>
</dbReference>
<dbReference type="SMR" id="P51299"/>
<dbReference type="GeneID" id="809928"/>
<dbReference type="GO" id="GO:0009507">
    <property type="term" value="C:chloroplast"/>
    <property type="evidence" value="ECO:0007669"/>
    <property type="project" value="UniProtKB-SubCell"/>
</dbReference>
<dbReference type="GO" id="GO:1990904">
    <property type="term" value="C:ribonucleoprotein complex"/>
    <property type="evidence" value="ECO:0007669"/>
    <property type="project" value="UniProtKB-KW"/>
</dbReference>
<dbReference type="GO" id="GO:0005840">
    <property type="term" value="C:ribosome"/>
    <property type="evidence" value="ECO:0007669"/>
    <property type="project" value="UniProtKB-KW"/>
</dbReference>
<dbReference type="GO" id="GO:0008097">
    <property type="term" value="F:5S rRNA binding"/>
    <property type="evidence" value="ECO:0007669"/>
    <property type="project" value="TreeGrafter"/>
</dbReference>
<dbReference type="GO" id="GO:0003735">
    <property type="term" value="F:structural constituent of ribosome"/>
    <property type="evidence" value="ECO:0007669"/>
    <property type="project" value="InterPro"/>
</dbReference>
<dbReference type="GO" id="GO:0006412">
    <property type="term" value="P:translation"/>
    <property type="evidence" value="ECO:0007669"/>
    <property type="project" value="UniProtKB-UniRule"/>
</dbReference>
<dbReference type="CDD" id="cd00432">
    <property type="entry name" value="Ribosomal_L18_L5e"/>
    <property type="match status" value="1"/>
</dbReference>
<dbReference type="FunFam" id="3.30.420.100:FF:000001">
    <property type="entry name" value="50S ribosomal protein L18"/>
    <property type="match status" value="1"/>
</dbReference>
<dbReference type="Gene3D" id="3.30.420.100">
    <property type="match status" value="1"/>
</dbReference>
<dbReference type="HAMAP" id="MF_01337_B">
    <property type="entry name" value="Ribosomal_uL18_B"/>
    <property type="match status" value="1"/>
</dbReference>
<dbReference type="InterPro" id="IPR004389">
    <property type="entry name" value="Ribosomal_uL18_bac-type"/>
</dbReference>
<dbReference type="InterPro" id="IPR005484">
    <property type="entry name" value="Ribosomal_uL18_bac/euk"/>
</dbReference>
<dbReference type="NCBIfam" id="TIGR00060">
    <property type="entry name" value="L18_bact"/>
    <property type="match status" value="1"/>
</dbReference>
<dbReference type="PANTHER" id="PTHR12899">
    <property type="entry name" value="39S RIBOSOMAL PROTEIN L18, MITOCHONDRIAL"/>
    <property type="match status" value="1"/>
</dbReference>
<dbReference type="PANTHER" id="PTHR12899:SF3">
    <property type="entry name" value="LARGE RIBOSOMAL SUBUNIT PROTEIN UL18M"/>
    <property type="match status" value="1"/>
</dbReference>
<dbReference type="Pfam" id="PF00861">
    <property type="entry name" value="Ribosomal_L18p"/>
    <property type="match status" value="1"/>
</dbReference>
<dbReference type="SUPFAM" id="SSF53137">
    <property type="entry name" value="Translational machinery components"/>
    <property type="match status" value="1"/>
</dbReference>
<gene>
    <name type="primary">rpl18</name>
</gene>
<organism>
    <name type="scientific">Porphyra purpurea</name>
    <name type="common">Red seaweed</name>
    <name type="synonym">Ulva purpurea</name>
    <dbReference type="NCBI Taxonomy" id="2787"/>
    <lineage>
        <taxon>Eukaryota</taxon>
        <taxon>Rhodophyta</taxon>
        <taxon>Bangiophyceae</taxon>
        <taxon>Bangiales</taxon>
        <taxon>Bangiaceae</taxon>
        <taxon>Porphyra</taxon>
    </lineage>
</organism>
<evidence type="ECO:0000250" key="1"/>
<evidence type="ECO:0000305" key="2"/>
<comment type="function">
    <text evidence="1">Binds 5S rRNA, forms part of the central protuberance of the 50S subunit.</text>
</comment>
<comment type="subunit">
    <text evidence="1">Part of the 50S ribosomal subunit; contacts the 5S rRNA.</text>
</comment>
<comment type="subcellular location">
    <subcellularLocation>
        <location>Plastid</location>
        <location>Chloroplast</location>
    </subcellularLocation>
</comment>
<comment type="similarity">
    <text evidence="2">Belongs to the universal ribosomal protein uL18 family.</text>
</comment>
<accession>P51299</accession>
<feature type="chain" id="PRO_0000131428" description="Large ribosomal subunit protein uL18c">
    <location>
        <begin position="1"/>
        <end position="120"/>
    </location>
</feature>
<sequence length="120" mass="13275">MKINSKQTRIHKHRRVRKKVQGTASRPRLCVFRSNKHIYAQVIDDIKGITLVAASSINLKLQSSITLGSNCEASRSVGKTLAERSIKEGIENVVFDRGGKLYHGRVEALAEAAKEAGMVF</sequence>